<keyword id="KW-0067">ATP-binding</keyword>
<keyword id="KW-0143">Chaperone</keyword>
<keyword id="KW-0963">Cytoplasm</keyword>
<keyword id="KW-0413">Isomerase</keyword>
<keyword id="KW-0547">Nucleotide-binding</keyword>
<feature type="chain" id="PRO_1000130058" description="Chaperonin GroEL">
    <location>
        <begin position="1"/>
        <end position="550"/>
    </location>
</feature>
<feature type="binding site" evidence="1">
    <location>
        <begin position="30"/>
        <end position="33"/>
    </location>
    <ligand>
        <name>ATP</name>
        <dbReference type="ChEBI" id="CHEBI:30616"/>
    </ligand>
</feature>
<feature type="binding site" evidence="1">
    <location>
        <position position="51"/>
    </location>
    <ligand>
        <name>ATP</name>
        <dbReference type="ChEBI" id="CHEBI:30616"/>
    </ligand>
</feature>
<feature type="binding site" evidence="1">
    <location>
        <begin position="87"/>
        <end position="91"/>
    </location>
    <ligand>
        <name>ATP</name>
        <dbReference type="ChEBI" id="CHEBI:30616"/>
    </ligand>
</feature>
<feature type="binding site" evidence="1">
    <location>
        <position position="415"/>
    </location>
    <ligand>
        <name>ATP</name>
        <dbReference type="ChEBI" id="CHEBI:30616"/>
    </ligand>
</feature>
<feature type="binding site" evidence="1">
    <location>
        <position position="495"/>
    </location>
    <ligand>
        <name>ATP</name>
        <dbReference type="ChEBI" id="CHEBI:30616"/>
    </ligand>
</feature>
<organism>
    <name type="scientific">Shewanella piezotolerans (strain WP3 / JCM 13877)</name>
    <dbReference type="NCBI Taxonomy" id="225849"/>
    <lineage>
        <taxon>Bacteria</taxon>
        <taxon>Pseudomonadati</taxon>
        <taxon>Pseudomonadota</taxon>
        <taxon>Gammaproteobacteria</taxon>
        <taxon>Alteromonadales</taxon>
        <taxon>Shewanellaceae</taxon>
        <taxon>Shewanella</taxon>
    </lineage>
</organism>
<proteinExistence type="inferred from homology"/>
<gene>
    <name evidence="1" type="primary">groEL</name>
    <name evidence="1" type="synonym">groL</name>
    <name type="ordered locus">swp_0586</name>
</gene>
<name>CH60_SHEPW</name>
<evidence type="ECO:0000255" key="1">
    <source>
        <dbReference type="HAMAP-Rule" id="MF_00600"/>
    </source>
</evidence>
<dbReference type="EC" id="5.6.1.7" evidence="1"/>
<dbReference type="EMBL" id="CP000472">
    <property type="protein sequence ID" value="ACJ27409.1"/>
    <property type="molecule type" value="Genomic_DNA"/>
</dbReference>
<dbReference type="RefSeq" id="WP_020910790.1">
    <property type="nucleotide sequence ID" value="NC_011566.1"/>
</dbReference>
<dbReference type="SMR" id="B8CID3"/>
<dbReference type="STRING" id="225849.swp_0586"/>
<dbReference type="KEGG" id="swp:swp_0586"/>
<dbReference type="eggNOG" id="COG0459">
    <property type="taxonomic scope" value="Bacteria"/>
</dbReference>
<dbReference type="HOGENOM" id="CLU_016503_3_0_6"/>
<dbReference type="OrthoDB" id="9766614at2"/>
<dbReference type="Proteomes" id="UP000000753">
    <property type="component" value="Chromosome"/>
</dbReference>
<dbReference type="GO" id="GO:0005737">
    <property type="term" value="C:cytoplasm"/>
    <property type="evidence" value="ECO:0007669"/>
    <property type="project" value="UniProtKB-SubCell"/>
</dbReference>
<dbReference type="GO" id="GO:0005524">
    <property type="term" value="F:ATP binding"/>
    <property type="evidence" value="ECO:0007669"/>
    <property type="project" value="UniProtKB-UniRule"/>
</dbReference>
<dbReference type="GO" id="GO:0140662">
    <property type="term" value="F:ATP-dependent protein folding chaperone"/>
    <property type="evidence" value="ECO:0007669"/>
    <property type="project" value="InterPro"/>
</dbReference>
<dbReference type="GO" id="GO:0016853">
    <property type="term" value="F:isomerase activity"/>
    <property type="evidence" value="ECO:0007669"/>
    <property type="project" value="UniProtKB-KW"/>
</dbReference>
<dbReference type="GO" id="GO:0051082">
    <property type="term" value="F:unfolded protein binding"/>
    <property type="evidence" value="ECO:0007669"/>
    <property type="project" value="UniProtKB-UniRule"/>
</dbReference>
<dbReference type="GO" id="GO:0042026">
    <property type="term" value="P:protein refolding"/>
    <property type="evidence" value="ECO:0007669"/>
    <property type="project" value="UniProtKB-UniRule"/>
</dbReference>
<dbReference type="CDD" id="cd03344">
    <property type="entry name" value="GroEL"/>
    <property type="match status" value="1"/>
</dbReference>
<dbReference type="FunFam" id="1.10.560.10:FF:000001">
    <property type="entry name" value="60 kDa chaperonin"/>
    <property type="match status" value="1"/>
</dbReference>
<dbReference type="FunFam" id="3.50.7.10:FF:000001">
    <property type="entry name" value="60 kDa chaperonin"/>
    <property type="match status" value="1"/>
</dbReference>
<dbReference type="Gene3D" id="3.50.7.10">
    <property type="entry name" value="GroEL"/>
    <property type="match status" value="1"/>
</dbReference>
<dbReference type="Gene3D" id="1.10.560.10">
    <property type="entry name" value="GroEL-like equatorial domain"/>
    <property type="match status" value="1"/>
</dbReference>
<dbReference type="Gene3D" id="3.30.260.10">
    <property type="entry name" value="TCP-1-like chaperonin intermediate domain"/>
    <property type="match status" value="1"/>
</dbReference>
<dbReference type="HAMAP" id="MF_00600">
    <property type="entry name" value="CH60"/>
    <property type="match status" value="1"/>
</dbReference>
<dbReference type="InterPro" id="IPR018370">
    <property type="entry name" value="Chaperonin_Cpn60_CS"/>
</dbReference>
<dbReference type="InterPro" id="IPR001844">
    <property type="entry name" value="Cpn60/GroEL"/>
</dbReference>
<dbReference type="InterPro" id="IPR002423">
    <property type="entry name" value="Cpn60/GroEL/TCP-1"/>
</dbReference>
<dbReference type="InterPro" id="IPR027409">
    <property type="entry name" value="GroEL-like_apical_dom_sf"/>
</dbReference>
<dbReference type="InterPro" id="IPR027413">
    <property type="entry name" value="GROEL-like_equatorial_sf"/>
</dbReference>
<dbReference type="InterPro" id="IPR027410">
    <property type="entry name" value="TCP-1-like_intermed_sf"/>
</dbReference>
<dbReference type="NCBIfam" id="TIGR02348">
    <property type="entry name" value="GroEL"/>
    <property type="match status" value="1"/>
</dbReference>
<dbReference type="NCBIfam" id="NF000592">
    <property type="entry name" value="PRK00013.1"/>
    <property type="match status" value="1"/>
</dbReference>
<dbReference type="NCBIfam" id="NF009487">
    <property type="entry name" value="PRK12849.1"/>
    <property type="match status" value="1"/>
</dbReference>
<dbReference type="NCBIfam" id="NF009488">
    <property type="entry name" value="PRK12850.1"/>
    <property type="match status" value="1"/>
</dbReference>
<dbReference type="NCBIfam" id="NF009489">
    <property type="entry name" value="PRK12851.1"/>
    <property type="match status" value="1"/>
</dbReference>
<dbReference type="PANTHER" id="PTHR45633">
    <property type="entry name" value="60 KDA HEAT SHOCK PROTEIN, MITOCHONDRIAL"/>
    <property type="match status" value="1"/>
</dbReference>
<dbReference type="Pfam" id="PF00118">
    <property type="entry name" value="Cpn60_TCP1"/>
    <property type="match status" value="1"/>
</dbReference>
<dbReference type="PRINTS" id="PR00298">
    <property type="entry name" value="CHAPERONIN60"/>
</dbReference>
<dbReference type="SUPFAM" id="SSF52029">
    <property type="entry name" value="GroEL apical domain-like"/>
    <property type="match status" value="1"/>
</dbReference>
<dbReference type="SUPFAM" id="SSF48592">
    <property type="entry name" value="GroEL equatorial domain-like"/>
    <property type="match status" value="1"/>
</dbReference>
<dbReference type="SUPFAM" id="SSF54849">
    <property type="entry name" value="GroEL-intermediate domain like"/>
    <property type="match status" value="1"/>
</dbReference>
<dbReference type="PROSITE" id="PS00296">
    <property type="entry name" value="CHAPERONINS_CPN60"/>
    <property type="match status" value="1"/>
</dbReference>
<comment type="function">
    <text evidence="1">Together with its co-chaperonin GroES, plays an essential role in assisting protein folding. The GroEL-GroES system forms a nano-cage that allows encapsulation of the non-native substrate proteins and provides a physical environment optimized to promote and accelerate protein folding.</text>
</comment>
<comment type="catalytic activity">
    <reaction evidence="1">
        <text>ATP + H2O + a folded polypeptide = ADP + phosphate + an unfolded polypeptide.</text>
        <dbReference type="EC" id="5.6.1.7"/>
    </reaction>
</comment>
<comment type="subunit">
    <text evidence="1">Forms a cylinder of 14 subunits composed of two heptameric rings stacked back-to-back. Interacts with the co-chaperonin GroES.</text>
</comment>
<comment type="subcellular location">
    <subcellularLocation>
        <location evidence="1">Cytoplasm</location>
    </subcellularLocation>
</comment>
<comment type="similarity">
    <text evidence="1">Belongs to the chaperonin (HSP60) family.</text>
</comment>
<reference key="1">
    <citation type="journal article" date="2008" name="PLoS ONE">
        <title>Environmental adaptation: genomic analysis of the piezotolerant and psychrotolerant deep-sea iron reducing bacterium Shewanella piezotolerans WP3.</title>
        <authorList>
            <person name="Wang F."/>
            <person name="Wang J."/>
            <person name="Jian H."/>
            <person name="Zhang B."/>
            <person name="Li S."/>
            <person name="Wang F."/>
            <person name="Zeng X."/>
            <person name="Gao L."/>
            <person name="Bartlett D.H."/>
            <person name="Yu J."/>
            <person name="Hu S."/>
            <person name="Xiao X."/>
        </authorList>
    </citation>
    <scope>NUCLEOTIDE SEQUENCE [LARGE SCALE GENOMIC DNA]</scope>
    <source>
        <strain>WP3 / JCM 13877</strain>
    </source>
</reference>
<protein>
    <recommendedName>
        <fullName evidence="1">Chaperonin GroEL</fullName>
        <ecNumber evidence="1">5.6.1.7</ecNumber>
    </recommendedName>
    <alternativeName>
        <fullName evidence="1">60 kDa chaperonin</fullName>
    </alternativeName>
    <alternativeName>
        <fullName evidence="1">Chaperonin-60</fullName>
        <shortName evidence="1">Cpn60</shortName>
    </alternativeName>
</protein>
<accession>B8CID3</accession>
<sequence length="550" mass="57497">MSAKEVLFGNDARVKMLAGVNVLANAVKVTLGPKGRNVVLDKSFGAPLITKDGVSVAKEIELEDKFENMGAQMVKEVASKANDAAGDGTTTATVLAQSIVTEGLKAVAAGMNPMDLKRGIDKAVIAAVAELKNLSQECSDTKAIAQVGTISANSDETIGEIIATAMERVGKEGVITVEEGQALENELDVVEGMQFDRGYLSPYFINKPETGSVELETPFILLVDKKVSNIRELLPILEGLAKTGKPLLIVAEDVEGEALATLVVNNMRGIVKVAAVKAPGFGDRRKAMLQDIAILTGGTVIAEEIGLELEKATLEDLGTAKRVVITKDDTTIIDGTGEETQIKARVAQIKIQAEESTSDYDKEKLQERMAKLAGGVAVIKVGAATEVEMKEKKARVEDALHATRAAVEEGVVAGGGVALVRVASKIGEVEVINEDQKHGVVIALRAMEAPLRQIATNAGEEGSVVANNVKNGTGNYGYNAGNDTYGDMLEMGILDPTKVTRSALQFASSIAGLMITTEAMVGEIPQDAAGAPDMGGMGGMGGMGGMGGMM</sequence>